<name>PPIL3_MYCMD</name>
<protein>
    <recommendedName>
        <fullName>Peptidyl-prolyl cis-trans isomerase-like 3</fullName>
        <shortName>PPIase</shortName>
        <ecNumber>5.2.1.8</ecNumber>
    </recommendedName>
    <alternativeName>
        <fullName>Rotamase</fullName>
    </alternativeName>
</protein>
<feature type="chain" id="PRO_0000232973" description="Peptidyl-prolyl cis-trans isomerase-like 3">
    <location>
        <begin position="1"/>
        <end position="168"/>
    </location>
</feature>
<feature type="domain" description="PPIase cyclophilin-type" evidence="2">
    <location>
        <begin position="1"/>
        <end position="156"/>
    </location>
</feature>
<reference key="1">
    <citation type="journal article" date="2006" name="Nature">
        <title>Insights from the genome of the biotrophic fungal plant pathogen Ustilago maydis.</title>
        <authorList>
            <person name="Kaemper J."/>
            <person name="Kahmann R."/>
            <person name="Boelker M."/>
            <person name="Ma L.-J."/>
            <person name="Brefort T."/>
            <person name="Saville B.J."/>
            <person name="Banuett F."/>
            <person name="Kronstad J.W."/>
            <person name="Gold S.E."/>
            <person name="Mueller O."/>
            <person name="Perlin M.H."/>
            <person name="Woesten H.A.B."/>
            <person name="de Vries R."/>
            <person name="Ruiz-Herrera J."/>
            <person name="Reynaga-Pena C.G."/>
            <person name="Snetselaar K."/>
            <person name="McCann M."/>
            <person name="Perez-Martin J."/>
            <person name="Feldbruegge M."/>
            <person name="Basse C.W."/>
            <person name="Steinberg G."/>
            <person name="Ibeas J.I."/>
            <person name="Holloman W."/>
            <person name="Guzman P."/>
            <person name="Farman M.L."/>
            <person name="Stajich J.E."/>
            <person name="Sentandreu R."/>
            <person name="Gonzalez-Prieto J.M."/>
            <person name="Kennell J.C."/>
            <person name="Molina L."/>
            <person name="Schirawski J."/>
            <person name="Mendoza-Mendoza A."/>
            <person name="Greilinger D."/>
            <person name="Muench K."/>
            <person name="Roessel N."/>
            <person name="Scherer M."/>
            <person name="Vranes M."/>
            <person name="Ladendorf O."/>
            <person name="Vincon V."/>
            <person name="Fuchs U."/>
            <person name="Sandrock B."/>
            <person name="Meng S."/>
            <person name="Ho E.C.H."/>
            <person name="Cahill M.J."/>
            <person name="Boyce K.J."/>
            <person name="Klose J."/>
            <person name="Klosterman S.J."/>
            <person name="Deelstra H.J."/>
            <person name="Ortiz-Castellanos L."/>
            <person name="Li W."/>
            <person name="Sanchez-Alonso P."/>
            <person name="Schreier P.H."/>
            <person name="Haeuser-Hahn I."/>
            <person name="Vaupel M."/>
            <person name="Koopmann E."/>
            <person name="Friedrich G."/>
            <person name="Voss H."/>
            <person name="Schlueter T."/>
            <person name="Margolis J."/>
            <person name="Platt D."/>
            <person name="Swimmer C."/>
            <person name="Gnirke A."/>
            <person name="Chen F."/>
            <person name="Vysotskaia V."/>
            <person name="Mannhaupt G."/>
            <person name="Gueldener U."/>
            <person name="Muensterkoetter M."/>
            <person name="Haase D."/>
            <person name="Oesterheld M."/>
            <person name="Mewes H.-W."/>
            <person name="Mauceli E.W."/>
            <person name="DeCaprio D."/>
            <person name="Wade C.M."/>
            <person name="Butler J."/>
            <person name="Young S.K."/>
            <person name="Jaffe D.B."/>
            <person name="Calvo S.E."/>
            <person name="Nusbaum C."/>
            <person name="Galagan J.E."/>
            <person name="Birren B.W."/>
        </authorList>
    </citation>
    <scope>NUCLEOTIDE SEQUENCE [LARGE SCALE GENOMIC DNA]</scope>
    <source>
        <strain>DSM 14603 / FGSC 9021 / UM521</strain>
    </source>
</reference>
<reference key="2">
    <citation type="submission" date="2014-09" db="EMBL/GenBank/DDBJ databases">
        <authorList>
            <person name="Gueldener U."/>
            <person name="Muensterkoetter M."/>
            <person name="Walter M.C."/>
            <person name="Mannhaupt G."/>
            <person name="Kahmann R."/>
        </authorList>
    </citation>
    <scope>GENOME REANNOTATION</scope>
    <source>
        <strain>DSM 14603 / FGSC 9021 / UM521</strain>
    </source>
</reference>
<organism>
    <name type="scientific">Mycosarcoma maydis</name>
    <name type="common">Corn smut fungus</name>
    <name type="synonym">Ustilago maydis</name>
    <dbReference type="NCBI Taxonomy" id="5270"/>
    <lineage>
        <taxon>Eukaryota</taxon>
        <taxon>Fungi</taxon>
        <taxon>Dikarya</taxon>
        <taxon>Basidiomycota</taxon>
        <taxon>Ustilaginomycotina</taxon>
        <taxon>Ustilaginomycetes</taxon>
        <taxon>Ustilaginales</taxon>
        <taxon>Ustilaginaceae</taxon>
        <taxon>Mycosarcoma</taxon>
    </lineage>
</organism>
<dbReference type="EC" id="5.2.1.8"/>
<dbReference type="EMBL" id="CM003144">
    <property type="protein sequence ID" value="KIS69652.1"/>
    <property type="molecule type" value="Genomic_DNA"/>
</dbReference>
<dbReference type="RefSeq" id="XP_011388533.1">
    <property type="nucleotide sequence ID" value="XM_011390231.1"/>
</dbReference>
<dbReference type="SMR" id="Q4PCH8"/>
<dbReference type="STRING" id="237631.Q4PCH8"/>
<dbReference type="EnsemblFungi" id="KIS69652">
    <property type="protein sequence ID" value="KIS69652"/>
    <property type="gene ID" value="UMAG_02185"/>
</dbReference>
<dbReference type="GeneID" id="23562992"/>
<dbReference type="KEGG" id="uma:UMAG_02185"/>
<dbReference type="VEuPathDB" id="FungiDB:UMAG_02185"/>
<dbReference type="eggNOG" id="KOG0884">
    <property type="taxonomic scope" value="Eukaryota"/>
</dbReference>
<dbReference type="HOGENOM" id="CLU_012062_16_3_1"/>
<dbReference type="InParanoid" id="Q4PCH8"/>
<dbReference type="OMA" id="FHEATPK"/>
<dbReference type="OrthoDB" id="271386at2759"/>
<dbReference type="Proteomes" id="UP000000561">
    <property type="component" value="Chromosome 5"/>
</dbReference>
<dbReference type="GO" id="GO:0071013">
    <property type="term" value="C:catalytic step 2 spliceosome"/>
    <property type="evidence" value="ECO:0000318"/>
    <property type="project" value="GO_Central"/>
</dbReference>
<dbReference type="GO" id="GO:0003755">
    <property type="term" value="F:peptidyl-prolyl cis-trans isomerase activity"/>
    <property type="evidence" value="ECO:0000318"/>
    <property type="project" value="GO_Central"/>
</dbReference>
<dbReference type="GO" id="GO:0006457">
    <property type="term" value="P:protein folding"/>
    <property type="evidence" value="ECO:0000318"/>
    <property type="project" value="GO_Central"/>
</dbReference>
<dbReference type="CDD" id="cd01928">
    <property type="entry name" value="Cyclophilin_PPIL3_like"/>
    <property type="match status" value="1"/>
</dbReference>
<dbReference type="FunFam" id="2.40.100.10:FF:000012">
    <property type="entry name" value="Peptidyl-prolyl cis-trans isomerase"/>
    <property type="match status" value="1"/>
</dbReference>
<dbReference type="Gene3D" id="2.40.100.10">
    <property type="entry name" value="Cyclophilin-like"/>
    <property type="match status" value="1"/>
</dbReference>
<dbReference type="InterPro" id="IPR029000">
    <property type="entry name" value="Cyclophilin-like_dom_sf"/>
</dbReference>
<dbReference type="InterPro" id="IPR024936">
    <property type="entry name" value="Cyclophilin-type_PPIase"/>
</dbReference>
<dbReference type="InterPro" id="IPR002130">
    <property type="entry name" value="Cyclophilin-type_PPIase_dom"/>
</dbReference>
<dbReference type="InterPro" id="IPR044666">
    <property type="entry name" value="Cyclophilin_A-like"/>
</dbReference>
<dbReference type="PANTHER" id="PTHR45625:SF2">
    <property type="entry name" value="PEPTIDYL-PROLYL CIS-TRANS ISOMERASE-LIKE 3"/>
    <property type="match status" value="1"/>
</dbReference>
<dbReference type="PANTHER" id="PTHR45625">
    <property type="entry name" value="PEPTIDYL-PROLYL CIS-TRANS ISOMERASE-RELATED"/>
    <property type="match status" value="1"/>
</dbReference>
<dbReference type="Pfam" id="PF00160">
    <property type="entry name" value="Pro_isomerase"/>
    <property type="match status" value="1"/>
</dbReference>
<dbReference type="PIRSF" id="PIRSF001467">
    <property type="entry name" value="Peptidylpro_ismrse"/>
    <property type="match status" value="1"/>
</dbReference>
<dbReference type="PRINTS" id="PR00153">
    <property type="entry name" value="CSAPPISMRASE"/>
</dbReference>
<dbReference type="SUPFAM" id="SSF50891">
    <property type="entry name" value="Cyclophilin-like"/>
    <property type="match status" value="1"/>
</dbReference>
<dbReference type="PROSITE" id="PS50072">
    <property type="entry name" value="CSA_PPIASE_2"/>
    <property type="match status" value="1"/>
</dbReference>
<evidence type="ECO:0000250" key="1"/>
<evidence type="ECO:0000255" key="2">
    <source>
        <dbReference type="PROSITE-ProRule" id="PRU00156"/>
    </source>
</evidence>
<evidence type="ECO:0000305" key="3"/>
<proteinExistence type="inferred from homology"/>
<accession>Q4PCH8</accession>
<accession>A0A0D1C873</accession>
<keyword id="KW-0413">Isomerase</keyword>
<keyword id="KW-1185">Reference proteome</keyword>
<keyword id="KW-0697">Rotamase</keyword>
<sequence>MSVTLHTNVGDIKVEVFCDATPRAAENFLGHCAAGTYNDVKWHRNIKSFMIQTGDPTGTGKGGQSIWGKPFADEIRSSLKFDRRGIVACANAGPDTNKSQFFITYAKQPHLDGKYTIIGKVIDGAEDGGTLDAMEAIPVDAKNRPTSEIRMTGVTVHANPIAIKAAGK</sequence>
<gene>
    <name type="primary">CYP10</name>
    <name type="ORF">UMAG_02185</name>
</gene>
<comment type="function">
    <text evidence="1">PPIases accelerate the folding of proteins. It catalyzes the cis-trans isomerization of proline imidic peptide bonds in oligopeptides (By similarity).</text>
</comment>
<comment type="catalytic activity">
    <reaction>
        <text>[protein]-peptidylproline (omega=180) = [protein]-peptidylproline (omega=0)</text>
        <dbReference type="Rhea" id="RHEA:16237"/>
        <dbReference type="Rhea" id="RHEA-COMP:10747"/>
        <dbReference type="Rhea" id="RHEA-COMP:10748"/>
        <dbReference type="ChEBI" id="CHEBI:83833"/>
        <dbReference type="ChEBI" id="CHEBI:83834"/>
        <dbReference type="EC" id="5.2.1.8"/>
    </reaction>
</comment>
<comment type="similarity">
    <text evidence="3">Belongs to the cyclophilin-type PPIase family. PPIL3 subfamily.</text>
</comment>